<reference key="1">
    <citation type="journal article" date="2006" name="J. Bacteriol.">
        <title>Comparative genomic evidence for a close relationship between the dimorphic prosthecate bacteria Hyphomonas neptunium and Caulobacter crescentus.</title>
        <authorList>
            <person name="Badger J.H."/>
            <person name="Hoover T.R."/>
            <person name="Brun Y.V."/>
            <person name="Weiner R.M."/>
            <person name="Laub M.T."/>
            <person name="Alexandre G."/>
            <person name="Mrazek J."/>
            <person name="Ren Q."/>
            <person name="Paulsen I.T."/>
            <person name="Nelson K.E."/>
            <person name="Khouri H.M."/>
            <person name="Radune D."/>
            <person name="Sosa J."/>
            <person name="Dodson R.J."/>
            <person name="Sullivan S.A."/>
            <person name="Rosovitz M.J."/>
            <person name="Madupu R."/>
            <person name="Brinkac L.M."/>
            <person name="Durkin A.S."/>
            <person name="Daugherty S.C."/>
            <person name="Kothari S.P."/>
            <person name="Giglio M.G."/>
            <person name="Zhou L."/>
            <person name="Haft D.H."/>
            <person name="Selengut J.D."/>
            <person name="Davidsen T.M."/>
            <person name="Yang Q."/>
            <person name="Zafar N."/>
            <person name="Ward N.L."/>
        </authorList>
    </citation>
    <scope>NUCLEOTIDE SEQUENCE [LARGE SCALE GENOMIC DNA]</scope>
    <source>
        <strain>ATCC 15444</strain>
    </source>
</reference>
<evidence type="ECO:0000255" key="1">
    <source>
        <dbReference type="HAMAP-Rule" id="MF_00222"/>
    </source>
</evidence>
<name>AROE_HYPNA</name>
<keyword id="KW-0028">Amino-acid biosynthesis</keyword>
<keyword id="KW-0057">Aromatic amino acid biosynthesis</keyword>
<keyword id="KW-0521">NADP</keyword>
<keyword id="KW-0560">Oxidoreductase</keyword>
<keyword id="KW-1185">Reference proteome</keyword>
<feature type="chain" id="PRO_0000325124" description="Shikimate dehydrogenase (NADP(+))">
    <location>
        <begin position="1"/>
        <end position="270"/>
    </location>
</feature>
<feature type="active site" description="Proton acceptor" evidence="1">
    <location>
        <position position="66"/>
    </location>
</feature>
<feature type="binding site" evidence="1">
    <location>
        <begin position="15"/>
        <end position="17"/>
    </location>
    <ligand>
        <name>shikimate</name>
        <dbReference type="ChEBI" id="CHEBI:36208"/>
    </ligand>
</feature>
<feature type="binding site" evidence="1">
    <location>
        <position position="62"/>
    </location>
    <ligand>
        <name>shikimate</name>
        <dbReference type="ChEBI" id="CHEBI:36208"/>
    </ligand>
</feature>
<feature type="binding site" evidence="1">
    <location>
        <position position="87"/>
    </location>
    <ligand>
        <name>shikimate</name>
        <dbReference type="ChEBI" id="CHEBI:36208"/>
    </ligand>
</feature>
<feature type="binding site" evidence="1">
    <location>
        <position position="102"/>
    </location>
    <ligand>
        <name>shikimate</name>
        <dbReference type="ChEBI" id="CHEBI:36208"/>
    </ligand>
</feature>
<feature type="binding site" evidence="1">
    <location>
        <begin position="126"/>
        <end position="130"/>
    </location>
    <ligand>
        <name>NADP(+)</name>
        <dbReference type="ChEBI" id="CHEBI:58349"/>
    </ligand>
</feature>
<feature type="binding site" evidence="1">
    <location>
        <begin position="149"/>
        <end position="154"/>
    </location>
    <ligand>
        <name>NADP(+)</name>
        <dbReference type="ChEBI" id="CHEBI:58349"/>
    </ligand>
</feature>
<feature type="binding site" evidence="1">
    <location>
        <position position="210"/>
    </location>
    <ligand>
        <name>NADP(+)</name>
        <dbReference type="ChEBI" id="CHEBI:58349"/>
    </ligand>
</feature>
<feature type="binding site" evidence="1">
    <location>
        <position position="212"/>
    </location>
    <ligand>
        <name>shikimate</name>
        <dbReference type="ChEBI" id="CHEBI:36208"/>
    </ligand>
</feature>
<feature type="binding site" evidence="1">
    <location>
        <position position="233"/>
    </location>
    <ligand>
        <name>NADP(+)</name>
        <dbReference type="ChEBI" id="CHEBI:58349"/>
    </ligand>
</feature>
<proteinExistence type="inferred from homology"/>
<gene>
    <name evidence="1" type="primary">aroE</name>
    <name type="ordered locus">HNE_0003</name>
</gene>
<accession>Q0C6A6</accession>
<sequence>MTHLLGVVGDPVAHSLSPFIHNGWLRAHQIDAVYSAFEVKAGELVSGLQSLSSQGVIGLNVTLPHKEEAMRLATSVSGTAHRLGAVNFLVRREDGWIGDNTDAPGFGLTLDFGDIEVSGRNVFLLGAGGSARAVASVLADRGARLTICNRTVGRAEDLARDLAPGARVRSLDEGLRKLSSAALVVNTLSLGHSGGRLELPPSAGGIFYDISYGKGAEAALKEAREKGWRALDGLGMLVAQAAISFEHWFGIKPDMAEAHARCRKLVEATS</sequence>
<dbReference type="EC" id="1.1.1.25" evidence="1"/>
<dbReference type="EMBL" id="CP000158">
    <property type="protein sequence ID" value="ABI77899.1"/>
    <property type="molecule type" value="Genomic_DNA"/>
</dbReference>
<dbReference type="RefSeq" id="WP_011645037.1">
    <property type="nucleotide sequence ID" value="NC_008358.1"/>
</dbReference>
<dbReference type="SMR" id="Q0C6A6"/>
<dbReference type="STRING" id="228405.HNE_0003"/>
<dbReference type="KEGG" id="hne:HNE_0003"/>
<dbReference type="eggNOG" id="COG0169">
    <property type="taxonomic scope" value="Bacteria"/>
</dbReference>
<dbReference type="HOGENOM" id="CLU_044063_2_0_5"/>
<dbReference type="UniPathway" id="UPA00053">
    <property type="reaction ID" value="UER00087"/>
</dbReference>
<dbReference type="Proteomes" id="UP000001959">
    <property type="component" value="Chromosome"/>
</dbReference>
<dbReference type="GO" id="GO:0005829">
    <property type="term" value="C:cytosol"/>
    <property type="evidence" value="ECO:0007669"/>
    <property type="project" value="TreeGrafter"/>
</dbReference>
<dbReference type="GO" id="GO:0050661">
    <property type="term" value="F:NADP binding"/>
    <property type="evidence" value="ECO:0007669"/>
    <property type="project" value="InterPro"/>
</dbReference>
<dbReference type="GO" id="GO:0004764">
    <property type="term" value="F:shikimate 3-dehydrogenase (NADP+) activity"/>
    <property type="evidence" value="ECO:0007669"/>
    <property type="project" value="UniProtKB-UniRule"/>
</dbReference>
<dbReference type="GO" id="GO:0008652">
    <property type="term" value="P:amino acid biosynthetic process"/>
    <property type="evidence" value="ECO:0007669"/>
    <property type="project" value="UniProtKB-KW"/>
</dbReference>
<dbReference type="GO" id="GO:0009073">
    <property type="term" value="P:aromatic amino acid family biosynthetic process"/>
    <property type="evidence" value="ECO:0007669"/>
    <property type="project" value="UniProtKB-KW"/>
</dbReference>
<dbReference type="GO" id="GO:0009423">
    <property type="term" value="P:chorismate biosynthetic process"/>
    <property type="evidence" value="ECO:0007669"/>
    <property type="project" value="UniProtKB-UniRule"/>
</dbReference>
<dbReference type="GO" id="GO:0019632">
    <property type="term" value="P:shikimate metabolic process"/>
    <property type="evidence" value="ECO:0007669"/>
    <property type="project" value="InterPro"/>
</dbReference>
<dbReference type="CDD" id="cd01065">
    <property type="entry name" value="NAD_bind_Shikimate_DH"/>
    <property type="match status" value="1"/>
</dbReference>
<dbReference type="Gene3D" id="3.40.50.10860">
    <property type="entry name" value="Leucine Dehydrogenase, chain A, domain 1"/>
    <property type="match status" value="1"/>
</dbReference>
<dbReference type="Gene3D" id="3.40.50.720">
    <property type="entry name" value="NAD(P)-binding Rossmann-like Domain"/>
    <property type="match status" value="1"/>
</dbReference>
<dbReference type="HAMAP" id="MF_00222">
    <property type="entry name" value="Shikimate_DH_AroE"/>
    <property type="match status" value="1"/>
</dbReference>
<dbReference type="InterPro" id="IPR046346">
    <property type="entry name" value="Aminoacid_DH-like_N_sf"/>
</dbReference>
<dbReference type="InterPro" id="IPR036291">
    <property type="entry name" value="NAD(P)-bd_dom_sf"/>
</dbReference>
<dbReference type="InterPro" id="IPR041121">
    <property type="entry name" value="SDH_C"/>
</dbReference>
<dbReference type="InterPro" id="IPR011342">
    <property type="entry name" value="Shikimate_DH"/>
</dbReference>
<dbReference type="InterPro" id="IPR013708">
    <property type="entry name" value="Shikimate_DH-bd_N"/>
</dbReference>
<dbReference type="InterPro" id="IPR022893">
    <property type="entry name" value="Shikimate_DH_fam"/>
</dbReference>
<dbReference type="InterPro" id="IPR006151">
    <property type="entry name" value="Shikm_DH/Glu-tRNA_Rdtase"/>
</dbReference>
<dbReference type="NCBIfam" id="TIGR00507">
    <property type="entry name" value="aroE"/>
    <property type="match status" value="1"/>
</dbReference>
<dbReference type="PANTHER" id="PTHR21089:SF1">
    <property type="entry name" value="BIFUNCTIONAL 3-DEHYDROQUINATE DEHYDRATASE_SHIKIMATE DEHYDROGENASE, CHLOROPLASTIC"/>
    <property type="match status" value="1"/>
</dbReference>
<dbReference type="PANTHER" id="PTHR21089">
    <property type="entry name" value="SHIKIMATE DEHYDROGENASE"/>
    <property type="match status" value="1"/>
</dbReference>
<dbReference type="Pfam" id="PF18317">
    <property type="entry name" value="SDH_C"/>
    <property type="match status" value="1"/>
</dbReference>
<dbReference type="Pfam" id="PF01488">
    <property type="entry name" value="Shikimate_DH"/>
    <property type="match status" value="1"/>
</dbReference>
<dbReference type="Pfam" id="PF08501">
    <property type="entry name" value="Shikimate_dh_N"/>
    <property type="match status" value="1"/>
</dbReference>
<dbReference type="SUPFAM" id="SSF53223">
    <property type="entry name" value="Aminoacid dehydrogenase-like, N-terminal domain"/>
    <property type="match status" value="1"/>
</dbReference>
<dbReference type="SUPFAM" id="SSF51735">
    <property type="entry name" value="NAD(P)-binding Rossmann-fold domains"/>
    <property type="match status" value="1"/>
</dbReference>
<comment type="function">
    <text evidence="1">Involved in the biosynthesis of the chorismate, which leads to the biosynthesis of aromatic amino acids. Catalyzes the reversible NADPH linked reduction of 3-dehydroshikimate (DHSA) to yield shikimate (SA).</text>
</comment>
<comment type="catalytic activity">
    <reaction evidence="1">
        <text>shikimate + NADP(+) = 3-dehydroshikimate + NADPH + H(+)</text>
        <dbReference type="Rhea" id="RHEA:17737"/>
        <dbReference type="ChEBI" id="CHEBI:15378"/>
        <dbReference type="ChEBI" id="CHEBI:16630"/>
        <dbReference type="ChEBI" id="CHEBI:36208"/>
        <dbReference type="ChEBI" id="CHEBI:57783"/>
        <dbReference type="ChEBI" id="CHEBI:58349"/>
        <dbReference type="EC" id="1.1.1.25"/>
    </reaction>
</comment>
<comment type="pathway">
    <text evidence="1">Metabolic intermediate biosynthesis; chorismate biosynthesis; chorismate from D-erythrose 4-phosphate and phosphoenolpyruvate: step 4/7.</text>
</comment>
<comment type="subunit">
    <text evidence="1">Homodimer.</text>
</comment>
<comment type="similarity">
    <text evidence="1">Belongs to the shikimate dehydrogenase family.</text>
</comment>
<organism>
    <name type="scientific">Hyphomonas neptunium (strain ATCC 15444)</name>
    <dbReference type="NCBI Taxonomy" id="228405"/>
    <lineage>
        <taxon>Bacteria</taxon>
        <taxon>Pseudomonadati</taxon>
        <taxon>Pseudomonadota</taxon>
        <taxon>Alphaproteobacteria</taxon>
        <taxon>Hyphomonadales</taxon>
        <taxon>Hyphomonadaceae</taxon>
        <taxon>Hyphomonas</taxon>
    </lineage>
</organism>
<protein>
    <recommendedName>
        <fullName evidence="1">Shikimate dehydrogenase (NADP(+))</fullName>
        <shortName evidence="1">SDH</shortName>
        <ecNumber evidence="1">1.1.1.25</ecNumber>
    </recommendedName>
</protein>